<keyword id="KW-0028">Amino-acid biosynthesis</keyword>
<keyword id="KW-0100">Branched-chain amino acid biosynthesis</keyword>
<keyword id="KW-0412">Isoleucine biosynthesis</keyword>
<keyword id="KW-0456">Lyase</keyword>
<keyword id="KW-0614">Plasmid</keyword>
<keyword id="KW-0663">Pyridoxal phosphate</keyword>
<keyword id="KW-1185">Reference proteome</keyword>
<evidence type="ECO:0000250" key="1"/>
<evidence type="ECO:0000305" key="2"/>
<gene>
    <name type="ordered locus">NGR_a01490</name>
    <name type="ORF">y4tJ</name>
</gene>
<organism>
    <name type="scientific">Sinorhizobium fredii (strain NBRC 101917 / NGR234)</name>
    <dbReference type="NCBI Taxonomy" id="394"/>
    <lineage>
        <taxon>Bacteria</taxon>
        <taxon>Pseudomonadati</taxon>
        <taxon>Pseudomonadota</taxon>
        <taxon>Alphaproteobacteria</taxon>
        <taxon>Hyphomicrobiales</taxon>
        <taxon>Rhizobiaceae</taxon>
        <taxon>Sinorhizobium/Ensifer group</taxon>
        <taxon>Sinorhizobium</taxon>
    </lineage>
</organism>
<comment type="catalytic activity">
    <reaction>
        <text>L-threonine = 2-oxobutanoate + NH4(+)</text>
        <dbReference type="Rhea" id="RHEA:22108"/>
        <dbReference type="ChEBI" id="CHEBI:16763"/>
        <dbReference type="ChEBI" id="CHEBI:28938"/>
        <dbReference type="ChEBI" id="CHEBI:57926"/>
        <dbReference type="EC" id="4.3.1.19"/>
    </reaction>
</comment>
<comment type="cofactor">
    <cofactor evidence="1">
        <name>pyridoxal 5'-phosphate</name>
        <dbReference type="ChEBI" id="CHEBI:597326"/>
    </cofactor>
</comment>
<comment type="pathway">
    <text>Amino-acid biosynthesis; L-isoleucine biosynthesis; 2-oxobutanoate from L-threonine: step 1/1.</text>
</comment>
<comment type="similarity">
    <text evidence="2">Belongs to the serine/threonine dehydratase family.</text>
</comment>
<comment type="caution">
    <text evidence="2">Lacks the C-terminal domain.</text>
</comment>
<geneLocation type="plasmid">
    <name>sym pNGR234a</name>
</geneLocation>
<dbReference type="EC" id="4.3.1.19"/>
<dbReference type="EMBL" id="U00090">
    <property type="protein sequence ID" value="AAB91863.1"/>
    <property type="molecule type" value="Genomic_DNA"/>
</dbReference>
<dbReference type="RefSeq" id="NP_444076.1">
    <property type="nucleotide sequence ID" value="NC_000914.2"/>
</dbReference>
<dbReference type="RefSeq" id="WP_010875187.1">
    <property type="nucleotide sequence ID" value="NC_000914.2"/>
</dbReference>
<dbReference type="SMR" id="P55664"/>
<dbReference type="KEGG" id="rhi:NGR_a01490"/>
<dbReference type="PATRIC" id="fig|394.7.peg.134"/>
<dbReference type="eggNOG" id="COG1171">
    <property type="taxonomic scope" value="Bacteria"/>
</dbReference>
<dbReference type="HOGENOM" id="CLU_021152_4_2_5"/>
<dbReference type="OrthoDB" id="9811476at2"/>
<dbReference type="UniPathway" id="UPA00047">
    <property type="reaction ID" value="UER00054"/>
</dbReference>
<dbReference type="Proteomes" id="UP000001054">
    <property type="component" value="Plasmid pNGR234a"/>
</dbReference>
<dbReference type="GO" id="GO:0003941">
    <property type="term" value="F:L-serine ammonia-lyase activity"/>
    <property type="evidence" value="ECO:0007669"/>
    <property type="project" value="TreeGrafter"/>
</dbReference>
<dbReference type="GO" id="GO:0030170">
    <property type="term" value="F:pyridoxal phosphate binding"/>
    <property type="evidence" value="ECO:0007669"/>
    <property type="project" value="InterPro"/>
</dbReference>
<dbReference type="GO" id="GO:0004794">
    <property type="term" value="F:threonine deaminase activity"/>
    <property type="evidence" value="ECO:0007669"/>
    <property type="project" value="UniProtKB-EC"/>
</dbReference>
<dbReference type="GO" id="GO:0009097">
    <property type="term" value="P:isoleucine biosynthetic process"/>
    <property type="evidence" value="ECO:0007669"/>
    <property type="project" value="UniProtKB-UniPathway"/>
</dbReference>
<dbReference type="GO" id="GO:0006565">
    <property type="term" value="P:L-serine catabolic process"/>
    <property type="evidence" value="ECO:0007669"/>
    <property type="project" value="TreeGrafter"/>
</dbReference>
<dbReference type="GO" id="GO:0006567">
    <property type="term" value="P:threonine catabolic process"/>
    <property type="evidence" value="ECO:0007669"/>
    <property type="project" value="TreeGrafter"/>
</dbReference>
<dbReference type="CDD" id="cd01562">
    <property type="entry name" value="Thr-dehyd"/>
    <property type="match status" value="1"/>
</dbReference>
<dbReference type="FunFam" id="3.40.50.1100:FF:000005">
    <property type="entry name" value="Threonine dehydratase catabolic"/>
    <property type="match status" value="1"/>
</dbReference>
<dbReference type="Gene3D" id="3.40.50.1100">
    <property type="match status" value="2"/>
</dbReference>
<dbReference type="InterPro" id="IPR014333">
    <property type="entry name" value="Ectoine_EutB"/>
</dbReference>
<dbReference type="InterPro" id="IPR050147">
    <property type="entry name" value="Ser/Thr_Dehydratase"/>
</dbReference>
<dbReference type="InterPro" id="IPR000634">
    <property type="entry name" value="Ser/Thr_deHydtase_PyrdxlP-BS"/>
</dbReference>
<dbReference type="InterPro" id="IPR001926">
    <property type="entry name" value="TrpB-like_PALP"/>
</dbReference>
<dbReference type="InterPro" id="IPR036052">
    <property type="entry name" value="TrpB-like_PALP_sf"/>
</dbReference>
<dbReference type="NCBIfam" id="TIGR02991">
    <property type="entry name" value="ectoine_eutB"/>
    <property type="match status" value="1"/>
</dbReference>
<dbReference type="NCBIfam" id="NF005680">
    <property type="entry name" value="PRK07476.1"/>
    <property type="match status" value="1"/>
</dbReference>
<dbReference type="PANTHER" id="PTHR48078:SF6">
    <property type="entry name" value="L-THREONINE DEHYDRATASE CATABOLIC TDCB"/>
    <property type="match status" value="1"/>
</dbReference>
<dbReference type="PANTHER" id="PTHR48078">
    <property type="entry name" value="THREONINE DEHYDRATASE, MITOCHONDRIAL-RELATED"/>
    <property type="match status" value="1"/>
</dbReference>
<dbReference type="Pfam" id="PF00291">
    <property type="entry name" value="PALP"/>
    <property type="match status" value="1"/>
</dbReference>
<dbReference type="SUPFAM" id="SSF53686">
    <property type="entry name" value="Tryptophan synthase beta subunit-like PLP-dependent enzymes"/>
    <property type="match status" value="1"/>
</dbReference>
<dbReference type="PROSITE" id="PS00165">
    <property type="entry name" value="DEHYDRATASE_SER_THR"/>
    <property type="match status" value="1"/>
</dbReference>
<feature type="chain" id="PRO_0000185587" description="Putative threonine dehydratase">
    <location>
        <begin position="1"/>
        <end position="332"/>
    </location>
</feature>
<feature type="modified residue" description="N6-(pyridoxal phosphate)lysine" evidence="1">
    <location>
        <position position="56"/>
    </location>
</feature>
<name>Y4TJ_SINFN</name>
<protein>
    <recommendedName>
        <fullName>Putative threonine dehydratase</fullName>
        <ecNumber>4.3.1.19</ecNumber>
    </recommendedName>
    <alternativeName>
        <fullName>Threonine deaminase</fullName>
    </alternativeName>
</protein>
<reference key="1">
    <citation type="journal article" date="1997" name="Nature">
        <title>Molecular basis of symbiosis between Rhizobium and legumes.</title>
        <authorList>
            <person name="Freiberg C.A."/>
            <person name="Fellay R."/>
            <person name="Bairoch A."/>
            <person name="Broughton W.J."/>
            <person name="Rosenthal A."/>
            <person name="Perret X."/>
        </authorList>
    </citation>
    <scope>NUCLEOTIDE SEQUENCE [LARGE SCALE GENOMIC DNA]</scope>
    <source>
        <strain>NBRC 101917 / NGR234</strain>
    </source>
</reference>
<reference key="2">
    <citation type="journal article" date="2009" name="Appl. Environ. Microbiol.">
        <title>Rhizobium sp. strain NGR234 possesses a remarkable number of secretion systems.</title>
        <authorList>
            <person name="Schmeisser C."/>
            <person name="Liesegang H."/>
            <person name="Krysciak D."/>
            <person name="Bakkou N."/>
            <person name="Le Quere A."/>
            <person name="Wollherr A."/>
            <person name="Heinemeyer I."/>
            <person name="Morgenstern B."/>
            <person name="Pommerening-Roeser A."/>
            <person name="Flores M."/>
            <person name="Palacios R."/>
            <person name="Brenner S."/>
            <person name="Gottschalk G."/>
            <person name="Schmitz R.A."/>
            <person name="Broughton W.J."/>
            <person name="Perret X."/>
            <person name="Strittmatter A.W."/>
            <person name="Streit W.R."/>
        </authorList>
    </citation>
    <scope>NUCLEOTIDE SEQUENCE [LARGE SCALE GENOMIC DNA]</scope>
    <source>
        <strain>NBRC 101917 / NGR234</strain>
    </source>
</reference>
<sequence length="332" mass="35070">MNELSNLSLESIERARERIEEHVFRTPLTTSRSLTELTGTQVSLKLEHYQRTGSFKLRGATNAILQLSPSDRARGVIAASTGNHGRALSYAAKAVGSRATICMSDLVPENKVSEIRKLGATVRIVGSSQDDAQVEVERLVAEEGLSMIPPFDHPHIIAGQRTVGLEIVEAMPDVAMVLLPLSGGGLAAGVAAAVKALRPHARIIGVTMDRGAAMKASIEAGHPVQVKEYRSLADSLGGGIGMANAWTFQMCRALLDDVVLVNEGEIAAGIRHAYEHERQILEGAGAVGIAALLSGKVAARGGSVGVVLSGQNIDMGLHREVINGVVRATEED</sequence>
<proteinExistence type="inferred from homology"/>
<accession>P55664</accession>